<sequence>MELKDYFPEMQVGPHPLGDKEWVSVKEGDQYVHFPKSCLSEKERLLLEVGLGQYEVLQPLGSPWQRYLLDHQGNPPQLFETSQFIYLNHQQVLPADLVELLQQMIAGLEVILPISTTQTAFLCRQATSIKVLRSLEGLLPTLESDFGLALTMFVGNAWYQVAAGTLRECFEEECQLLTAYLKQKSGGKLLTFAEVMLWSILSHQSFPALTRQFHQFLNPQSDMADVVHALWSEHGNLVQTAQRLYIHRNSLQYKLDKFAQQSGLHLKQLDDLAFAYLFLLKY</sequence>
<keyword id="KW-0903">Direct protein sequencing</keyword>
<organism>
    <name type="scientific">Streptococcus dysgalactiae subsp. equisimilis</name>
    <name type="common">Streptococcus equisimilis</name>
    <dbReference type="NCBI Taxonomy" id="119602"/>
    <lineage>
        <taxon>Bacteria</taxon>
        <taxon>Bacillati</taxon>
        <taxon>Bacillota</taxon>
        <taxon>Bacilli</taxon>
        <taxon>Lactobacillales</taxon>
        <taxon>Streptococcaceae</taxon>
        <taxon>Streptococcus</taxon>
    </lineage>
</organism>
<reference key="1">
    <citation type="journal article" date="1993" name="Mol. Gen. Genet.">
        <title>Genetic organization of the streptokinase region of the Streptococcus equisimilis H46A chromosome.</title>
        <authorList>
            <person name="Mechold U."/>
            <person name="Steiner K."/>
            <person name="Vettermann S."/>
            <person name="Malke H."/>
        </authorList>
    </citation>
    <scope>NUCLEOTIDE SEQUENCE [GENOMIC DNA]</scope>
    <scope>PROTEIN SEQUENCE OF 1-21</scope>
    <source>
        <strain>H46A</strain>
    </source>
</reference>
<reference key="2">
    <citation type="journal article" date="1985" name="Gene">
        <title>Nucleotide sequence of the streptokinase gene from Streptococcus equisimilis H46A.</title>
        <authorList>
            <person name="Malke H."/>
            <person name="Roe B.A."/>
            <person name="Ferretti J.J."/>
        </authorList>
    </citation>
    <scope>NUCLEOTIDE SEQUENCE [GENOMIC DNA] OF 164-282</scope>
    <source>
        <strain>H46A</strain>
    </source>
</reference>
<dbReference type="EMBL" id="X72832">
    <property type="protein sequence ID" value="CAA51350.1"/>
    <property type="molecule type" value="Genomic_DNA"/>
</dbReference>
<dbReference type="PIR" id="S39972">
    <property type="entry name" value="S39972"/>
</dbReference>
<dbReference type="RefSeq" id="WP_084917038.1">
    <property type="nucleotide sequence ID" value="NZ_CBCRYK010000002.1"/>
</dbReference>
<dbReference type="SMR" id="Q54087"/>
<dbReference type="Gene3D" id="1.10.10.2840">
    <property type="entry name" value="PucR C-terminal helix-turn-helix domain"/>
    <property type="match status" value="1"/>
</dbReference>
<dbReference type="InterPro" id="IPR051448">
    <property type="entry name" value="CdaR-like_regulators"/>
</dbReference>
<dbReference type="InterPro" id="IPR009057">
    <property type="entry name" value="Homeodomain-like_sf"/>
</dbReference>
<dbReference type="InterPro" id="IPR025736">
    <property type="entry name" value="PucR_C-HTH_dom"/>
</dbReference>
<dbReference type="InterPro" id="IPR042070">
    <property type="entry name" value="PucR_C-HTH_sf"/>
</dbReference>
<dbReference type="PANTHER" id="PTHR33744">
    <property type="entry name" value="CARBOHYDRATE DIACID REGULATOR"/>
    <property type="match status" value="1"/>
</dbReference>
<dbReference type="PANTHER" id="PTHR33744:SF15">
    <property type="entry name" value="CARBOHYDRATE DIACID REGULATOR"/>
    <property type="match status" value="1"/>
</dbReference>
<dbReference type="Pfam" id="PF13556">
    <property type="entry name" value="HTH_30"/>
    <property type="match status" value="1"/>
</dbReference>
<dbReference type="SUPFAM" id="SSF46689">
    <property type="entry name" value="Homeodomain-like"/>
    <property type="match status" value="1"/>
</dbReference>
<name>LRPR_STREQ</name>
<comment type="function">
    <text>Not essential for viability or growth. Nevertheless, uncontrolled production in E.coli is detrimental to the normal physiology of the bacteria.</text>
</comment>
<feature type="chain" id="PRO_0000084488" description="Leucine-rich protein">
    <location>
        <begin position="1"/>
        <end position="282"/>
    </location>
</feature>
<accession>Q54087</accession>
<protein>
    <recommendedName>
        <fullName>Leucine-rich protein</fullName>
    </recommendedName>
</protein>
<proteinExistence type="evidence at protein level"/>
<gene>
    <name type="primary">lrp</name>
</gene>